<proteinExistence type="inferred from homology"/>
<evidence type="ECO:0000255" key="1">
    <source>
        <dbReference type="HAMAP-Rule" id="MF_00198"/>
    </source>
</evidence>
<accession>B9E5S1</accession>
<protein>
    <recommendedName>
        <fullName evidence="1">Polyamine aminopropyltransferase</fullName>
    </recommendedName>
    <alternativeName>
        <fullName evidence="1">Putrescine aminopropyltransferase</fullName>
        <shortName evidence="1">PAPT</shortName>
    </alternativeName>
    <alternativeName>
        <fullName evidence="1">Spermidine synthase</fullName>
        <shortName evidence="1">SPDS</shortName>
        <shortName evidence="1">SPDSY</shortName>
        <ecNumber evidence="1">2.5.1.16</ecNumber>
    </alternativeName>
</protein>
<keyword id="KW-0963">Cytoplasm</keyword>
<keyword id="KW-0620">Polyamine biosynthesis</keyword>
<keyword id="KW-0745">Spermidine biosynthesis</keyword>
<keyword id="KW-0808">Transferase</keyword>
<reference key="1">
    <citation type="submission" date="2005-09" db="EMBL/GenBank/DDBJ databases">
        <title>Complete genome sequence of Clostridium kluyveri and comparative genomics of Clostridia species.</title>
        <authorList>
            <person name="Inui M."/>
            <person name="Nonaka H."/>
            <person name="Shinoda Y."/>
            <person name="Ikenaga Y."/>
            <person name="Abe M."/>
            <person name="Naito K."/>
            <person name="Vertes A.A."/>
            <person name="Yukawa H."/>
        </authorList>
    </citation>
    <scope>NUCLEOTIDE SEQUENCE [LARGE SCALE GENOMIC DNA]</scope>
    <source>
        <strain>NBRC 12016</strain>
    </source>
</reference>
<gene>
    <name evidence="1" type="primary">speE</name>
    <name type="ordered locus">CKR_2795</name>
</gene>
<sequence>MDLWLREGQIEDAAMTYKIKETLVTKKTKYQELAIVDTYALGRMLVLDGIVQTTVKDEYVYHEMITHIPLFTHPNPQKVLIVGGGDGGTVREVLKHETVEKVVLCEIDEQVVYECKKYLPEISCELDNPKCEVFIGDGIKYVHQHRNEFDVIIVDSTDPFGAAEGLFGGSFYKEIYNCLTEDGIFIAQTETPFYLPEVVKQVYKDAKEIFPITRLFMAGIPTYPSGFWSFTIGSKKYDPKEVDLSSTLNINTKYYTKELHKACFVLPKFVEDLTR</sequence>
<comment type="function">
    <text evidence="1">Catalyzes the irreversible transfer of a propylamine group from the amino donor S-adenosylmethioninamine (decarboxy-AdoMet) to putrescine (1,4-diaminobutane) to yield spermidine.</text>
</comment>
<comment type="catalytic activity">
    <reaction evidence="1">
        <text>S-adenosyl 3-(methylsulfanyl)propylamine + putrescine = S-methyl-5'-thioadenosine + spermidine + H(+)</text>
        <dbReference type="Rhea" id="RHEA:12721"/>
        <dbReference type="ChEBI" id="CHEBI:15378"/>
        <dbReference type="ChEBI" id="CHEBI:17509"/>
        <dbReference type="ChEBI" id="CHEBI:57443"/>
        <dbReference type="ChEBI" id="CHEBI:57834"/>
        <dbReference type="ChEBI" id="CHEBI:326268"/>
        <dbReference type="EC" id="2.5.1.16"/>
    </reaction>
</comment>
<comment type="pathway">
    <text evidence="1">Amine and polyamine biosynthesis; spermidine biosynthesis; spermidine from putrescine: step 1/1.</text>
</comment>
<comment type="subunit">
    <text evidence="1">Homodimer or homotetramer.</text>
</comment>
<comment type="subcellular location">
    <subcellularLocation>
        <location evidence="1">Cytoplasm</location>
    </subcellularLocation>
</comment>
<comment type="similarity">
    <text evidence="1">Belongs to the spermidine/spermine synthase family.</text>
</comment>
<organism>
    <name type="scientific">Clostridium kluyveri (strain NBRC 12016)</name>
    <dbReference type="NCBI Taxonomy" id="583346"/>
    <lineage>
        <taxon>Bacteria</taxon>
        <taxon>Bacillati</taxon>
        <taxon>Bacillota</taxon>
        <taxon>Clostridia</taxon>
        <taxon>Eubacteriales</taxon>
        <taxon>Clostridiaceae</taxon>
        <taxon>Clostridium</taxon>
    </lineage>
</organism>
<dbReference type="EC" id="2.5.1.16" evidence="1"/>
<dbReference type="EMBL" id="AP009049">
    <property type="protein sequence ID" value="BAH07846.1"/>
    <property type="molecule type" value="Genomic_DNA"/>
</dbReference>
<dbReference type="RefSeq" id="WP_012103500.1">
    <property type="nucleotide sequence ID" value="NC_011837.1"/>
</dbReference>
<dbReference type="SMR" id="B9E5S1"/>
<dbReference type="KEGG" id="ckr:CKR_2795"/>
<dbReference type="HOGENOM" id="CLU_048199_0_0_9"/>
<dbReference type="UniPathway" id="UPA00248">
    <property type="reaction ID" value="UER00314"/>
</dbReference>
<dbReference type="Proteomes" id="UP000007969">
    <property type="component" value="Chromosome"/>
</dbReference>
<dbReference type="GO" id="GO:0005829">
    <property type="term" value="C:cytosol"/>
    <property type="evidence" value="ECO:0007669"/>
    <property type="project" value="TreeGrafter"/>
</dbReference>
<dbReference type="GO" id="GO:0004766">
    <property type="term" value="F:spermidine synthase activity"/>
    <property type="evidence" value="ECO:0007669"/>
    <property type="project" value="UniProtKB-UniRule"/>
</dbReference>
<dbReference type="GO" id="GO:0008295">
    <property type="term" value="P:spermidine biosynthetic process"/>
    <property type="evidence" value="ECO:0007669"/>
    <property type="project" value="UniProtKB-UniRule"/>
</dbReference>
<dbReference type="CDD" id="cd02440">
    <property type="entry name" value="AdoMet_MTases"/>
    <property type="match status" value="1"/>
</dbReference>
<dbReference type="FunFam" id="3.40.50.150:FF:000056">
    <property type="entry name" value="Polyamine aminopropyltransferase"/>
    <property type="match status" value="1"/>
</dbReference>
<dbReference type="Gene3D" id="2.30.140.10">
    <property type="entry name" value="Spermidine synthase, tetramerisation domain"/>
    <property type="match status" value="1"/>
</dbReference>
<dbReference type="Gene3D" id="3.40.50.150">
    <property type="entry name" value="Vaccinia Virus protein VP39"/>
    <property type="match status" value="1"/>
</dbReference>
<dbReference type="HAMAP" id="MF_00198">
    <property type="entry name" value="Spermidine_synth"/>
    <property type="match status" value="1"/>
</dbReference>
<dbReference type="InterPro" id="IPR030374">
    <property type="entry name" value="PABS"/>
</dbReference>
<dbReference type="InterPro" id="IPR030373">
    <property type="entry name" value="PABS_CS"/>
</dbReference>
<dbReference type="InterPro" id="IPR029063">
    <property type="entry name" value="SAM-dependent_MTases_sf"/>
</dbReference>
<dbReference type="InterPro" id="IPR001045">
    <property type="entry name" value="Spermi_synthase"/>
</dbReference>
<dbReference type="InterPro" id="IPR035246">
    <property type="entry name" value="Spermidine_synt_N"/>
</dbReference>
<dbReference type="InterPro" id="IPR037163">
    <property type="entry name" value="Spermidine_synt_N_sf"/>
</dbReference>
<dbReference type="NCBIfam" id="NF002010">
    <property type="entry name" value="PRK00811.1"/>
    <property type="match status" value="1"/>
</dbReference>
<dbReference type="NCBIfam" id="TIGR00417">
    <property type="entry name" value="speE"/>
    <property type="match status" value="1"/>
</dbReference>
<dbReference type="PANTHER" id="PTHR11558:SF11">
    <property type="entry name" value="SPERMIDINE SYNTHASE"/>
    <property type="match status" value="1"/>
</dbReference>
<dbReference type="PANTHER" id="PTHR11558">
    <property type="entry name" value="SPERMIDINE/SPERMINE SYNTHASE"/>
    <property type="match status" value="1"/>
</dbReference>
<dbReference type="Pfam" id="PF17284">
    <property type="entry name" value="Spermine_synt_N"/>
    <property type="match status" value="1"/>
</dbReference>
<dbReference type="Pfam" id="PF01564">
    <property type="entry name" value="Spermine_synth"/>
    <property type="match status" value="1"/>
</dbReference>
<dbReference type="SUPFAM" id="SSF53335">
    <property type="entry name" value="S-adenosyl-L-methionine-dependent methyltransferases"/>
    <property type="match status" value="1"/>
</dbReference>
<dbReference type="PROSITE" id="PS01330">
    <property type="entry name" value="PABS_1"/>
    <property type="match status" value="1"/>
</dbReference>
<dbReference type="PROSITE" id="PS51006">
    <property type="entry name" value="PABS_2"/>
    <property type="match status" value="1"/>
</dbReference>
<name>SPEE_CLOK1</name>
<feature type="chain" id="PRO_1000124438" description="Polyamine aminopropyltransferase">
    <location>
        <begin position="1"/>
        <end position="275"/>
    </location>
</feature>
<feature type="domain" description="PABS" evidence="1">
    <location>
        <begin position="2"/>
        <end position="235"/>
    </location>
</feature>
<feature type="active site" description="Proton acceptor" evidence="1">
    <location>
        <position position="155"/>
    </location>
</feature>
<feature type="binding site" evidence="1">
    <location>
        <position position="31"/>
    </location>
    <ligand>
        <name>S-methyl-5'-thioadenosine</name>
        <dbReference type="ChEBI" id="CHEBI:17509"/>
    </ligand>
</feature>
<feature type="binding site" evidence="1">
    <location>
        <position position="62"/>
    </location>
    <ligand>
        <name>spermidine</name>
        <dbReference type="ChEBI" id="CHEBI:57834"/>
    </ligand>
</feature>
<feature type="binding site" evidence="1">
    <location>
        <position position="86"/>
    </location>
    <ligand>
        <name>spermidine</name>
        <dbReference type="ChEBI" id="CHEBI:57834"/>
    </ligand>
</feature>
<feature type="binding site" evidence="1">
    <location>
        <position position="106"/>
    </location>
    <ligand>
        <name>S-methyl-5'-thioadenosine</name>
        <dbReference type="ChEBI" id="CHEBI:17509"/>
    </ligand>
</feature>
<feature type="binding site" evidence="1">
    <location>
        <begin position="137"/>
        <end position="138"/>
    </location>
    <ligand>
        <name>S-methyl-5'-thioadenosine</name>
        <dbReference type="ChEBI" id="CHEBI:17509"/>
    </ligand>
</feature>
<feature type="binding site" evidence="1">
    <location>
        <begin position="155"/>
        <end position="158"/>
    </location>
    <ligand>
        <name>spermidine</name>
        <dbReference type="ChEBI" id="CHEBI:57834"/>
    </ligand>
</feature>